<accession>Q47RP1</accession>
<gene>
    <name evidence="1" type="primary">hrcA</name>
    <name type="ordered locus">Tfu_0838</name>
</gene>
<proteinExistence type="inferred from homology"/>
<reference key="1">
    <citation type="journal article" date="2007" name="J. Bacteriol.">
        <title>Genome sequence and analysis of the soil cellulolytic actinomycete Thermobifida fusca YX.</title>
        <authorList>
            <person name="Lykidis A."/>
            <person name="Mavromatis K."/>
            <person name="Ivanova N."/>
            <person name="Anderson I."/>
            <person name="Land M."/>
            <person name="DiBartolo G."/>
            <person name="Martinez M."/>
            <person name="Lapidus A."/>
            <person name="Lucas S."/>
            <person name="Copeland A."/>
            <person name="Richardson P."/>
            <person name="Wilson D.B."/>
            <person name="Kyrpides N."/>
        </authorList>
    </citation>
    <scope>NUCLEOTIDE SEQUENCE [LARGE SCALE GENOMIC DNA]</scope>
    <source>
        <strain>YX</strain>
    </source>
</reference>
<dbReference type="EMBL" id="CP000088">
    <property type="protein sequence ID" value="AAZ54876.1"/>
    <property type="molecule type" value="Genomic_DNA"/>
</dbReference>
<dbReference type="SMR" id="Q47RP1"/>
<dbReference type="STRING" id="269800.Tfu_0838"/>
<dbReference type="KEGG" id="tfu:Tfu_0838"/>
<dbReference type="eggNOG" id="COG1420">
    <property type="taxonomic scope" value="Bacteria"/>
</dbReference>
<dbReference type="HOGENOM" id="CLU_050019_2_0_11"/>
<dbReference type="GO" id="GO:0003677">
    <property type="term" value="F:DNA binding"/>
    <property type="evidence" value="ECO:0007669"/>
    <property type="project" value="InterPro"/>
</dbReference>
<dbReference type="GO" id="GO:0045892">
    <property type="term" value="P:negative regulation of DNA-templated transcription"/>
    <property type="evidence" value="ECO:0007669"/>
    <property type="project" value="UniProtKB-UniRule"/>
</dbReference>
<dbReference type="FunFam" id="1.10.10.10:FF:000049">
    <property type="entry name" value="Heat-inducible transcription repressor HrcA"/>
    <property type="match status" value="1"/>
</dbReference>
<dbReference type="Gene3D" id="3.30.450.40">
    <property type="match status" value="1"/>
</dbReference>
<dbReference type="Gene3D" id="3.30.390.60">
    <property type="entry name" value="Heat-inducible transcription repressor hrca homolog, domain 3"/>
    <property type="match status" value="1"/>
</dbReference>
<dbReference type="Gene3D" id="1.10.10.10">
    <property type="entry name" value="Winged helix-like DNA-binding domain superfamily/Winged helix DNA-binding domain"/>
    <property type="match status" value="1"/>
</dbReference>
<dbReference type="HAMAP" id="MF_00081">
    <property type="entry name" value="HrcA"/>
    <property type="match status" value="1"/>
</dbReference>
<dbReference type="InterPro" id="IPR029016">
    <property type="entry name" value="GAF-like_dom_sf"/>
</dbReference>
<dbReference type="InterPro" id="IPR002571">
    <property type="entry name" value="HrcA"/>
</dbReference>
<dbReference type="InterPro" id="IPR021153">
    <property type="entry name" value="HrcA_C"/>
</dbReference>
<dbReference type="InterPro" id="IPR036388">
    <property type="entry name" value="WH-like_DNA-bd_sf"/>
</dbReference>
<dbReference type="InterPro" id="IPR036390">
    <property type="entry name" value="WH_DNA-bd_sf"/>
</dbReference>
<dbReference type="InterPro" id="IPR005104">
    <property type="entry name" value="WHTH_HrcA_DNA-bd"/>
</dbReference>
<dbReference type="InterPro" id="IPR023120">
    <property type="entry name" value="WHTH_transcript_rep_HrcA_IDD"/>
</dbReference>
<dbReference type="NCBIfam" id="TIGR00331">
    <property type="entry name" value="hrcA"/>
    <property type="match status" value="1"/>
</dbReference>
<dbReference type="PANTHER" id="PTHR34824">
    <property type="entry name" value="HEAT-INDUCIBLE TRANSCRIPTION REPRESSOR HRCA"/>
    <property type="match status" value="1"/>
</dbReference>
<dbReference type="PANTHER" id="PTHR34824:SF1">
    <property type="entry name" value="HEAT-INDUCIBLE TRANSCRIPTION REPRESSOR HRCA"/>
    <property type="match status" value="1"/>
</dbReference>
<dbReference type="Pfam" id="PF01628">
    <property type="entry name" value="HrcA"/>
    <property type="match status" value="1"/>
</dbReference>
<dbReference type="Pfam" id="PF03444">
    <property type="entry name" value="HrcA_DNA-bdg"/>
    <property type="match status" value="1"/>
</dbReference>
<dbReference type="PIRSF" id="PIRSF005485">
    <property type="entry name" value="HrcA"/>
    <property type="match status" value="1"/>
</dbReference>
<dbReference type="SUPFAM" id="SSF55781">
    <property type="entry name" value="GAF domain-like"/>
    <property type="match status" value="1"/>
</dbReference>
<dbReference type="SUPFAM" id="SSF46785">
    <property type="entry name" value="Winged helix' DNA-binding domain"/>
    <property type="match status" value="1"/>
</dbReference>
<evidence type="ECO:0000255" key="1">
    <source>
        <dbReference type="HAMAP-Rule" id="MF_00081"/>
    </source>
</evidence>
<sequence>MLDDRNVLDDRKLAVLRAIVEDYVSTNEPVGSKALAERHKLGVSPATIRNDMVALEELGYIAQPHTSAGRVPTDKGYRLFVDRLSKVKPLSKAERRAIETFLSGALDLDEIVSRTVRLLAHLTRQVAIMQYPSLTRSSVQHLELVPLGPQRLMLVLITNTGRVEQRVIDGLAEVSDDVVENLRGALNRALVGKWLTEAPKEFPTVLAQLPLEERPIAESVMSVLTESLVEKHEGKVVFGGTANLAAMGFSAGLRDVLEALEENVVLIRLLGEMGDASMLTVRIGAENNHEGLQSTSIVAAGYGIGDQTLAKLGVVGPTRMDYPGTMGAVRAVARYVGQILAGQ</sequence>
<name>HRCA_THEFY</name>
<feature type="chain" id="PRO_1000010475" description="Heat-inducible transcription repressor HrcA">
    <location>
        <begin position="1"/>
        <end position="343"/>
    </location>
</feature>
<comment type="function">
    <text evidence="1">Negative regulator of class I heat shock genes (grpE-dnaK-dnaJ and groELS operons). Prevents heat-shock induction of these operons.</text>
</comment>
<comment type="similarity">
    <text evidence="1">Belongs to the HrcA family.</text>
</comment>
<protein>
    <recommendedName>
        <fullName evidence="1">Heat-inducible transcription repressor HrcA</fullName>
    </recommendedName>
</protein>
<keyword id="KW-0678">Repressor</keyword>
<keyword id="KW-0346">Stress response</keyword>
<keyword id="KW-0804">Transcription</keyword>
<keyword id="KW-0805">Transcription regulation</keyword>
<organism>
    <name type="scientific">Thermobifida fusca (strain YX)</name>
    <dbReference type="NCBI Taxonomy" id="269800"/>
    <lineage>
        <taxon>Bacteria</taxon>
        <taxon>Bacillati</taxon>
        <taxon>Actinomycetota</taxon>
        <taxon>Actinomycetes</taxon>
        <taxon>Streptosporangiales</taxon>
        <taxon>Nocardiopsidaceae</taxon>
        <taxon>Thermobifida</taxon>
    </lineage>
</organism>